<dbReference type="EMBL" id="CP000730">
    <property type="protein sequence ID" value="ABX30202.1"/>
    <property type="molecule type" value="Genomic_DNA"/>
</dbReference>
<dbReference type="RefSeq" id="WP_001250038.1">
    <property type="nucleotide sequence ID" value="NC_010079.1"/>
</dbReference>
<dbReference type="SMR" id="A8Z325"/>
<dbReference type="GeneID" id="98346530"/>
<dbReference type="KEGG" id="sax:USA300HOU_2209"/>
<dbReference type="HOGENOM" id="CLU_082184_2_2_9"/>
<dbReference type="GO" id="GO:0022625">
    <property type="term" value="C:cytosolic large ribosomal subunit"/>
    <property type="evidence" value="ECO:0007669"/>
    <property type="project" value="TreeGrafter"/>
</dbReference>
<dbReference type="GO" id="GO:0003729">
    <property type="term" value="F:mRNA binding"/>
    <property type="evidence" value="ECO:0007669"/>
    <property type="project" value="TreeGrafter"/>
</dbReference>
<dbReference type="GO" id="GO:0003735">
    <property type="term" value="F:structural constituent of ribosome"/>
    <property type="evidence" value="ECO:0007669"/>
    <property type="project" value="InterPro"/>
</dbReference>
<dbReference type="GO" id="GO:0017148">
    <property type="term" value="P:negative regulation of translation"/>
    <property type="evidence" value="ECO:0007669"/>
    <property type="project" value="TreeGrafter"/>
</dbReference>
<dbReference type="GO" id="GO:0006412">
    <property type="term" value="P:translation"/>
    <property type="evidence" value="ECO:0007669"/>
    <property type="project" value="UniProtKB-UniRule"/>
</dbReference>
<dbReference type="CDD" id="cd00392">
    <property type="entry name" value="Ribosomal_L13"/>
    <property type="match status" value="1"/>
</dbReference>
<dbReference type="FunFam" id="3.90.1180.10:FF:000001">
    <property type="entry name" value="50S ribosomal protein L13"/>
    <property type="match status" value="1"/>
</dbReference>
<dbReference type="Gene3D" id="3.90.1180.10">
    <property type="entry name" value="Ribosomal protein L13"/>
    <property type="match status" value="1"/>
</dbReference>
<dbReference type="HAMAP" id="MF_01366">
    <property type="entry name" value="Ribosomal_uL13"/>
    <property type="match status" value="1"/>
</dbReference>
<dbReference type="InterPro" id="IPR005822">
    <property type="entry name" value="Ribosomal_uL13"/>
</dbReference>
<dbReference type="InterPro" id="IPR005823">
    <property type="entry name" value="Ribosomal_uL13_bac-type"/>
</dbReference>
<dbReference type="InterPro" id="IPR023563">
    <property type="entry name" value="Ribosomal_uL13_CS"/>
</dbReference>
<dbReference type="InterPro" id="IPR036899">
    <property type="entry name" value="Ribosomal_uL13_sf"/>
</dbReference>
<dbReference type="NCBIfam" id="TIGR01066">
    <property type="entry name" value="rplM_bact"/>
    <property type="match status" value="1"/>
</dbReference>
<dbReference type="PANTHER" id="PTHR11545:SF2">
    <property type="entry name" value="LARGE RIBOSOMAL SUBUNIT PROTEIN UL13M"/>
    <property type="match status" value="1"/>
</dbReference>
<dbReference type="PANTHER" id="PTHR11545">
    <property type="entry name" value="RIBOSOMAL PROTEIN L13"/>
    <property type="match status" value="1"/>
</dbReference>
<dbReference type="Pfam" id="PF00572">
    <property type="entry name" value="Ribosomal_L13"/>
    <property type="match status" value="1"/>
</dbReference>
<dbReference type="PIRSF" id="PIRSF002181">
    <property type="entry name" value="Ribosomal_L13"/>
    <property type="match status" value="1"/>
</dbReference>
<dbReference type="SUPFAM" id="SSF52161">
    <property type="entry name" value="Ribosomal protein L13"/>
    <property type="match status" value="1"/>
</dbReference>
<dbReference type="PROSITE" id="PS00783">
    <property type="entry name" value="RIBOSOMAL_L13"/>
    <property type="match status" value="1"/>
</dbReference>
<keyword id="KW-0687">Ribonucleoprotein</keyword>
<keyword id="KW-0689">Ribosomal protein</keyword>
<organism>
    <name type="scientific">Staphylococcus aureus (strain USA300 / TCH1516)</name>
    <dbReference type="NCBI Taxonomy" id="451516"/>
    <lineage>
        <taxon>Bacteria</taxon>
        <taxon>Bacillati</taxon>
        <taxon>Bacillota</taxon>
        <taxon>Bacilli</taxon>
        <taxon>Bacillales</taxon>
        <taxon>Staphylococcaceae</taxon>
        <taxon>Staphylococcus</taxon>
    </lineage>
</organism>
<evidence type="ECO:0000255" key="1">
    <source>
        <dbReference type="HAMAP-Rule" id="MF_01366"/>
    </source>
</evidence>
<evidence type="ECO:0000305" key="2"/>
<reference key="1">
    <citation type="journal article" date="2007" name="BMC Microbiol.">
        <title>Subtle genetic changes enhance virulence of methicillin resistant and sensitive Staphylococcus aureus.</title>
        <authorList>
            <person name="Highlander S.K."/>
            <person name="Hulten K.G."/>
            <person name="Qin X."/>
            <person name="Jiang H."/>
            <person name="Yerrapragada S."/>
            <person name="Mason E.O. Jr."/>
            <person name="Shang Y."/>
            <person name="Williams T.M."/>
            <person name="Fortunov R.M."/>
            <person name="Liu Y."/>
            <person name="Igboeli O."/>
            <person name="Petrosino J."/>
            <person name="Tirumalai M."/>
            <person name="Uzman A."/>
            <person name="Fox G.E."/>
            <person name="Cardenas A.M."/>
            <person name="Muzny D.M."/>
            <person name="Hemphill L."/>
            <person name="Ding Y."/>
            <person name="Dugan S."/>
            <person name="Blyth P.R."/>
            <person name="Buhay C.J."/>
            <person name="Dinh H.H."/>
            <person name="Hawes A.C."/>
            <person name="Holder M."/>
            <person name="Kovar C.L."/>
            <person name="Lee S.L."/>
            <person name="Liu W."/>
            <person name="Nazareth L.V."/>
            <person name="Wang Q."/>
            <person name="Zhou J."/>
            <person name="Kaplan S.L."/>
            <person name="Weinstock G.M."/>
        </authorList>
    </citation>
    <scope>NUCLEOTIDE SEQUENCE [LARGE SCALE GENOMIC DNA]</scope>
    <source>
        <strain>USA300 / TCH1516</strain>
    </source>
</reference>
<feature type="chain" id="PRO_1000087110" description="Large ribosomal subunit protein uL13">
    <location>
        <begin position="1"/>
        <end position="145"/>
    </location>
</feature>
<accession>A8Z325</accession>
<protein>
    <recommendedName>
        <fullName evidence="1">Large ribosomal subunit protein uL13</fullName>
    </recommendedName>
    <alternativeName>
        <fullName evidence="2">50S ribosomal protein L13</fullName>
    </alternativeName>
</protein>
<comment type="function">
    <text evidence="1">This protein is one of the early assembly proteins of the 50S ribosomal subunit, although it is not seen to bind rRNA by itself. It is important during the early stages of 50S assembly.</text>
</comment>
<comment type="subunit">
    <text evidence="1">Part of the 50S ribosomal subunit.</text>
</comment>
<comment type="similarity">
    <text evidence="1">Belongs to the universal ribosomal protein uL13 family.</text>
</comment>
<proteinExistence type="inferred from homology"/>
<sequence>MRQTFMANESNIERKWYVIDAEGQTLGRLSSEVASILRGKNKVTYTPHVDTGDYVIVINASKIEFTGNKETDKVYYRHSNHPGGIKSITAGELRRTNPERLIENSIKGMLPSTRLGEKQGKKLFVYGGAEHPHAAQQPENYELRG</sequence>
<name>RL13_STAAT</name>
<gene>
    <name evidence="1" type="primary">rplM</name>
    <name type="ordered locus">USA300HOU_2209</name>
</gene>